<reference key="1">
    <citation type="journal article" date="2004" name="Nature">
        <title>Genome evolution in yeasts.</title>
        <authorList>
            <person name="Dujon B."/>
            <person name="Sherman D."/>
            <person name="Fischer G."/>
            <person name="Durrens P."/>
            <person name="Casaregola S."/>
            <person name="Lafontaine I."/>
            <person name="de Montigny J."/>
            <person name="Marck C."/>
            <person name="Neuveglise C."/>
            <person name="Talla E."/>
            <person name="Goffard N."/>
            <person name="Frangeul L."/>
            <person name="Aigle M."/>
            <person name="Anthouard V."/>
            <person name="Babour A."/>
            <person name="Barbe V."/>
            <person name="Barnay S."/>
            <person name="Blanchin S."/>
            <person name="Beckerich J.-M."/>
            <person name="Beyne E."/>
            <person name="Bleykasten C."/>
            <person name="Boisrame A."/>
            <person name="Boyer J."/>
            <person name="Cattolico L."/>
            <person name="Confanioleri F."/>
            <person name="de Daruvar A."/>
            <person name="Despons L."/>
            <person name="Fabre E."/>
            <person name="Fairhead C."/>
            <person name="Ferry-Dumazet H."/>
            <person name="Groppi A."/>
            <person name="Hantraye F."/>
            <person name="Hennequin C."/>
            <person name="Jauniaux N."/>
            <person name="Joyet P."/>
            <person name="Kachouri R."/>
            <person name="Kerrest A."/>
            <person name="Koszul R."/>
            <person name="Lemaire M."/>
            <person name="Lesur I."/>
            <person name="Ma L."/>
            <person name="Muller H."/>
            <person name="Nicaud J.-M."/>
            <person name="Nikolski M."/>
            <person name="Oztas S."/>
            <person name="Ozier-Kalogeropoulos O."/>
            <person name="Pellenz S."/>
            <person name="Potier S."/>
            <person name="Richard G.-F."/>
            <person name="Straub M.-L."/>
            <person name="Suleau A."/>
            <person name="Swennen D."/>
            <person name="Tekaia F."/>
            <person name="Wesolowski-Louvel M."/>
            <person name="Westhof E."/>
            <person name="Wirth B."/>
            <person name="Zeniou-Meyer M."/>
            <person name="Zivanovic Y."/>
            <person name="Bolotin-Fukuhara M."/>
            <person name="Thierry A."/>
            <person name="Bouchier C."/>
            <person name="Caudron B."/>
            <person name="Scarpelli C."/>
            <person name="Gaillardin C."/>
            <person name="Weissenbach J."/>
            <person name="Wincker P."/>
            <person name="Souciet J.-L."/>
        </authorList>
    </citation>
    <scope>NUCLEOTIDE SEQUENCE [LARGE SCALE GENOMIC DNA]</scope>
    <source>
        <strain>ATCC 2001 / BCRC 20586 / JCM 3761 / NBRC 0622 / NRRL Y-65 / CBS 138</strain>
    </source>
</reference>
<keyword id="KW-0067">ATP-binding</keyword>
<keyword id="KW-0963">Cytoplasm</keyword>
<keyword id="KW-0227">DNA damage</keyword>
<keyword id="KW-0234">DNA repair</keyword>
<keyword id="KW-0238">DNA-binding</keyword>
<keyword id="KW-0347">Helicase</keyword>
<keyword id="KW-0378">Hydrolase</keyword>
<keyword id="KW-0479">Metal-binding</keyword>
<keyword id="KW-0547">Nucleotide-binding</keyword>
<keyword id="KW-0539">Nucleus</keyword>
<keyword id="KW-1185">Reference proteome</keyword>
<keyword id="KW-0862">Zinc</keyword>
<keyword id="KW-0863">Zinc-finger</keyword>
<accession>Q6FY76</accession>
<sequence length="1151" mass="132346">MDQNANQKKRFFKDELESSIETTLTDKSSFLFEPQVDAIQEENANDPEEQIAQGTQESPFIEQLRAVLPTIRLEVALALEEKYRDIDDGLDLAISEYFDQYQTGNDDAPPSSLELQHSQEVLTVPDNEEKDTDLQLVSVKRKREDDFMQSSQSKKPQRANSSWKKFVGSLQVTVMVTRPTMRPVPYGTPLIFKRSNNNVPLKKIYEQLNKKKTGLAAFVKIYSANDEREIGRVPEDIARIVFPLLHRNEVHFKLTMIYPGDKRLSIGDNIIIQMDSFLTSTLFNRKENPTFSTQNGNGRERFGAIVETEQELEERNIRMGLIMLFDKIKLRPVKDEAKFLEKLKQDGDDNEIVDLEDDESFGNFLSQEPLNDELPTQHQEDTMNINQLTSFYKATQSSKQLNSLIPTTPPPELVKVELRKYQKQGLTWMLRREGISIGHDNEDKSEDDTTLLNPLWRQFQWPRNMSWHNQSTGSENDNSNPKLIFFYGNLHTGEFSLERPTMNSFKNGGILSDEMGLGKTISALSLVLMRPKDEHTTSQSLFHQESSNLSSDDVIEIKEPERSYAYKTTLIIVPMSLLTQWRDEFDKVNNNAGLTCELYYGGNVSSLKSLLIKRKNPPTVVLTTYGIVQNEWTKLSKDGTNIRSLGRTSGIFSIEFFRIILDEGHTIRNKSTITSKAVLELSSKYRWILTGTPIINRLDDLYSLVKFLKLEPWSQIGYWKQFITNPFEERNFKQAFDVVNAIMEPVLLRRTKQMKDTDGNPLVQLPPKEIVIEKLQLSKKQKLIYEEFLQRAEKTFRSGLQSGDLLKKYSTILVHILRLRQVCCDSNLIGTLDENDEDLSSGNNKLITESVDVKTLIPDTEEEEDEVPPFENDELDKLIESVEAKFIDSNQLIPVECSICTAEPIESSSAVVTECEHVFCKECLEEYGNFQKEKSLQQKCPNCRRDINLNRCLAFEKGSDGILKLIHFDRKERPAKLNALIRHLQQLQDSSAGEQVVVFSQFSSYLDILESQLNEVYSSNKLKVYKFDGRLSLKERTAVLEDFKVKDYAVQKVLLLSLKAGGVGLNLTCASYAFMMDPWWSPSMEDQAIDRIHRIGQTNSVKVIRFVIDGSIEEKMLRIQDRKRTLGEAMDTDEDERRKRRIEEIQMLFES</sequence>
<proteinExistence type="inferred from homology"/>
<comment type="function">
    <text evidence="1">Probable helicase, member of the UBC2/RAD6 epistasis group. Functions with DNA repair protein RAD18 in error-free postreplication DNA repair. Involved in the maintenance of wild-type rates of instability of simple repetitive sequences such as poly(GT) repeats. Seems to be involved in maintaining a balance which acts in favor of error-prone non-homologous joining during DNA double-strand breaks repairs (By similarity).</text>
</comment>
<comment type="subcellular location">
    <subcellularLocation>
        <location evidence="1">Cytoplasm</location>
    </subcellularLocation>
    <subcellularLocation>
        <location evidence="1">Nucleus</location>
    </subcellularLocation>
</comment>
<comment type="similarity">
    <text evidence="6">Belongs to the SNF2/RAD54 helicase family.</text>
</comment>
<organism>
    <name type="scientific">Candida glabrata (strain ATCC 2001 / BCRC 20586 / JCM 3761 / NBRC 0622 / NRRL Y-65 / CBS 138)</name>
    <name type="common">Yeast</name>
    <name type="synonym">Nakaseomyces glabratus</name>
    <dbReference type="NCBI Taxonomy" id="284593"/>
    <lineage>
        <taxon>Eukaryota</taxon>
        <taxon>Fungi</taxon>
        <taxon>Dikarya</taxon>
        <taxon>Ascomycota</taxon>
        <taxon>Saccharomycotina</taxon>
        <taxon>Saccharomycetes</taxon>
        <taxon>Saccharomycetales</taxon>
        <taxon>Saccharomycetaceae</taxon>
        <taxon>Nakaseomyces</taxon>
    </lineage>
</organism>
<feature type="chain" id="PRO_0000056120" description="DNA repair protein RAD5">
    <location>
        <begin position="1"/>
        <end position="1151"/>
    </location>
</feature>
<feature type="domain" description="Helicase ATP-binding" evidence="3">
    <location>
        <begin position="500"/>
        <end position="711"/>
    </location>
</feature>
<feature type="domain" description="Helicase C-terminal" evidence="4">
    <location>
        <begin position="979"/>
        <end position="1146"/>
    </location>
</feature>
<feature type="zinc finger region" description="RING-type" evidence="2">
    <location>
        <begin position="897"/>
        <end position="944"/>
    </location>
</feature>
<feature type="region of interest" description="Disordered" evidence="5">
    <location>
        <begin position="35"/>
        <end position="54"/>
    </location>
</feature>
<feature type="region of interest" description="Disordered" evidence="5">
    <location>
        <begin position="142"/>
        <end position="161"/>
    </location>
</feature>
<feature type="short sequence motif" description="DEGH box">
    <location>
        <begin position="662"/>
        <end position="665"/>
    </location>
</feature>
<feature type="compositionally biased region" description="Acidic residues" evidence="5">
    <location>
        <begin position="39"/>
        <end position="49"/>
    </location>
</feature>
<feature type="compositionally biased region" description="Polar residues" evidence="5">
    <location>
        <begin position="148"/>
        <end position="161"/>
    </location>
</feature>
<feature type="binding site" evidence="3">
    <location>
        <begin position="513"/>
        <end position="520"/>
    </location>
    <ligand>
        <name>ATP</name>
        <dbReference type="ChEBI" id="CHEBI:30616"/>
    </ligand>
</feature>
<name>RAD5_CANGA</name>
<protein>
    <recommendedName>
        <fullName>DNA repair protein RAD5</fullName>
        <ecNumber>3.6.4.-</ecNumber>
    </recommendedName>
</protein>
<gene>
    <name type="primary">RAD5</name>
    <name type="ordered locus">CAGL0A03432g</name>
</gene>
<dbReference type="EC" id="3.6.4.-"/>
<dbReference type="EMBL" id="CR380947">
    <property type="protein sequence ID" value="CAG57810.1"/>
    <property type="molecule type" value="Genomic_DNA"/>
</dbReference>
<dbReference type="RefSeq" id="XP_444917.1">
    <property type="nucleotide sequence ID" value="XM_444917.1"/>
</dbReference>
<dbReference type="SMR" id="Q6FY76"/>
<dbReference type="FunCoup" id="Q6FY76">
    <property type="interactions" value="1087"/>
</dbReference>
<dbReference type="STRING" id="284593.Q6FY76"/>
<dbReference type="EnsemblFungi" id="CAGL0A03432g-T">
    <property type="protein sequence ID" value="CAGL0A03432g-T-p1"/>
    <property type="gene ID" value="CAGL0A03432g"/>
</dbReference>
<dbReference type="KEGG" id="cgr:2886385"/>
<dbReference type="CGD" id="CAL0126887">
    <property type="gene designation" value="CAGL0A03432g"/>
</dbReference>
<dbReference type="VEuPathDB" id="FungiDB:CAGL0A03432g"/>
<dbReference type="eggNOG" id="KOG1001">
    <property type="taxonomic scope" value="Eukaryota"/>
</dbReference>
<dbReference type="HOGENOM" id="CLU_000315_2_5_1"/>
<dbReference type="InParanoid" id="Q6FY76"/>
<dbReference type="OMA" id="KVEPWSN"/>
<dbReference type="Proteomes" id="UP000002428">
    <property type="component" value="Chromosome A"/>
</dbReference>
<dbReference type="GO" id="GO:0000785">
    <property type="term" value="C:chromatin"/>
    <property type="evidence" value="ECO:0007669"/>
    <property type="project" value="EnsemblFungi"/>
</dbReference>
<dbReference type="GO" id="GO:0000781">
    <property type="term" value="C:chromosome, telomeric region"/>
    <property type="evidence" value="ECO:0007669"/>
    <property type="project" value="EnsemblFungi"/>
</dbReference>
<dbReference type="GO" id="GO:0005737">
    <property type="term" value="C:cytoplasm"/>
    <property type="evidence" value="ECO:0007669"/>
    <property type="project" value="UniProtKB-SubCell"/>
</dbReference>
<dbReference type="GO" id="GO:0005634">
    <property type="term" value="C:nucleus"/>
    <property type="evidence" value="ECO:0007669"/>
    <property type="project" value="UniProtKB-SubCell"/>
</dbReference>
<dbReference type="GO" id="GO:0005524">
    <property type="term" value="F:ATP binding"/>
    <property type="evidence" value="ECO:0007669"/>
    <property type="project" value="UniProtKB-KW"/>
</dbReference>
<dbReference type="GO" id="GO:0000400">
    <property type="term" value="F:four-way junction DNA binding"/>
    <property type="evidence" value="ECO:0007669"/>
    <property type="project" value="EnsemblFungi"/>
</dbReference>
<dbReference type="GO" id="GO:0009378">
    <property type="term" value="F:four-way junction helicase activity"/>
    <property type="evidence" value="ECO:0007669"/>
    <property type="project" value="EnsemblFungi"/>
</dbReference>
<dbReference type="GO" id="GO:0016818">
    <property type="term" value="F:hydrolase activity, acting on acid anhydrides, in phosphorus-containing anhydrides"/>
    <property type="evidence" value="ECO:0007669"/>
    <property type="project" value="InterPro"/>
</dbReference>
<dbReference type="GO" id="GO:0000403">
    <property type="term" value="F:Y-form DNA binding"/>
    <property type="evidence" value="ECO:0007669"/>
    <property type="project" value="EnsemblFungi"/>
</dbReference>
<dbReference type="GO" id="GO:0008270">
    <property type="term" value="F:zinc ion binding"/>
    <property type="evidence" value="ECO:0007669"/>
    <property type="project" value="UniProtKB-KW"/>
</dbReference>
<dbReference type="GO" id="GO:0006302">
    <property type="term" value="P:double-strand break repair"/>
    <property type="evidence" value="ECO:0007669"/>
    <property type="project" value="EnsemblFungi"/>
</dbReference>
<dbReference type="GO" id="GO:0042275">
    <property type="term" value="P:error-free postreplication DNA repair"/>
    <property type="evidence" value="ECO:0007669"/>
    <property type="project" value="EnsemblFungi"/>
</dbReference>
<dbReference type="GO" id="GO:0070987">
    <property type="term" value="P:error-free translesion synthesis"/>
    <property type="evidence" value="ECO:0007669"/>
    <property type="project" value="EnsemblFungi"/>
</dbReference>
<dbReference type="GO" id="GO:0042276">
    <property type="term" value="P:error-prone translesion synthesis"/>
    <property type="evidence" value="ECO:0007669"/>
    <property type="project" value="EnsemblFungi"/>
</dbReference>
<dbReference type="GO" id="GO:0010994">
    <property type="term" value="P:free ubiquitin chain polymerization"/>
    <property type="evidence" value="ECO:0007669"/>
    <property type="project" value="EnsemblFungi"/>
</dbReference>
<dbReference type="GO" id="GO:0000209">
    <property type="term" value="P:protein polyubiquitination"/>
    <property type="evidence" value="ECO:0007669"/>
    <property type="project" value="EnsemblFungi"/>
</dbReference>
<dbReference type="CDD" id="cd18008">
    <property type="entry name" value="DEXDc_SHPRH-like"/>
    <property type="match status" value="1"/>
</dbReference>
<dbReference type="CDD" id="cd23131">
    <property type="entry name" value="RING-HC_RAD5"/>
    <property type="match status" value="1"/>
</dbReference>
<dbReference type="CDD" id="cd18793">
    <property type="entry name" value="SF2_C_SNF"/>
    <property type="match status" value="1"/>
</dbReference>
<dbReference type="Gene3D" id="3.40.50.300">
    <property type="entry name" value="P-loop containing nucleotide triphosphate hydrolases"/>
    <property type="match status" value="1"/>
</dbReference>
<dbReference type="Gene3D" id="3.40.50.10810">
    <property type="entry name" value="Tandem AAA-ATPase domain"/>
    <property type="match status" value="1"/>
</dbReference>
<dbReference type="Gene3D" id="3.30.40.10">
    <property type="entry name" value="Zinc/RING finger domain, C3HC4 (zinc finger)"/>
    <property type="match status" value="1"/>
</dbReference>
<dbReference type="InterPro" id="IPR014001">
    <property type="entry name" value="Helicase_ATP-bd"/>
</dbReference>
<dbReference type="InterPro" id="IPR001650">
    <property type="entry name" value="Helicase_C-like"/>
</dbReference>
<dbReference type="InterPro" id="IPR014905">
    <property type="entry name" value="HIRAN"/>
</dbReference>
<dbReference type="InterPro" id="IPR027417">
    <property type="entry name" value="P-loop_NTPase"/>
</dbReference>
<dbReference type="InterPro" id="IPR038718">
    <property type="entry name" value="SNF2-like_sf"/>
</dbReference>
<dbReference type="InterPro" id="IPR049730">
    <property type="entry name" value="SNF2/RAD54-like_C"/>
</dbReference>
<dbReference type="InterPro" id="IPR000330">
    <property type="entry name" value="SNF2_N"/>
</dbReference>
<dbReference type="InterPro" id="IPR050628">
    <property type="entry name" value="SNF2_RAD54_helicase_TF"/>
</dbReference>
<dbReference type="InterPro" id="IPR001841">
    <property type="entry name" value="Znf_RING"/>
</dbReference>
<dbReference type="InterPro" id="IPR013083">
    <property type="entry name" value="Znf_RING/FYVE/PHD"/>
</dbReference>
<dbReference type="InterPro" id="IPR017907">
    <property type="entry name" value="Znf_RING_CS"/>
</dbReference>
<dbReference type="PANTHER" id="PTHR45626:SF22">
    <property type="entry name" value="DNA REPAIR PROTEIN RAD5"/>
    <property type="match status" value="1"/>
</dbReference>
<dbReference type="PANTHER" id="PTHR45626">
    <property type="entry name" value="TRANSCRIPTION TERMINATION FACTOR 2-RELATED"/>
    <property type="match status" value="1"/>
</dbReference>
<dbReference type="Pfam" id="PF00271">
    <property type="entry name" value="Helicase_C"/>
    <property type="match status" value="1"/>
</dbReference>
<dbReference type="Pfam" id="PF08797">
    <property type="entry name" value="HIRAN"/>
    <property type="match status" value="1"/>
</dbReference>
<dbReference type="Pfam" id="PF00176">
    <property type="entry name" value="SNF2-rel_dom"/>
    <property type="match status" value="1"/>
</dbReference>
<dbReference type="Pfam" id="PF13639">
    <property type="entry name" value="zf-RING_2"/>
    <property type="match status" value="1"/>
</dbReference>
<dbReference type="SMART" id="SM00487">
    <property type="entry name" value="DEXDc"/>
    <property type="match status" value="1"/>
</dbReference>
<dbReference type="SMART" id="SM00490">
    <property type="entry name" value="HELICc"/>
    <property type="match status" value="1"/>
</dbReference>
<dbReference type="SMART" id="SM00910">
    <property type="entry name" value="HIRAN"/>
    <property type="match status" value="1"/>
</dbReference>
<dbReference type="SMART" id="SM00184">
    <property type="entry name" value="RING"/>
    <property type="match status" value="1"/>
</dbReference>
<dbReference type="SUPFAM" id="SSF52540">
    <property type="entry name" value="P-loop containing nucleoside triphosphate hydrolases"/>
    <property type="match status" value="2"/>
</dbReference>
<dbReference type="SUPFAM" id="SSF57850">
    <property type="entry name" value="RING/U-box"/>
    <property type="match status" value="1"/>
</dbReference>
<dbReference type="PROSITE" id="PS51192">
    <property type="entry name" value="HELICASE_ATP_BIND_1"/>
    <property type="match status" value="1"/>
</dbReference>
<dbReference type="PROSITE" id="PS51194">
    <property type="entry name" value="HELICASE_CTER"/>
    <property type="match status" value="1"/>
</dbReference>
<dbReference type="PROSITE" id="PS00518">
    <property type="entry name" value="ZF_RING_1"/>
    <property type="match status" value="1"/>
</dbReference>
<dbReference type="PROSITE" id="PS50089">
    <property type="entry name" value="ZF_RING_2"/>
    <property type="match status" value="1"/>
</dbReference>
<evidence type="ECO:0000250" key="1"/>
<evidence type="ECO:0000255" key="2">
    <source>
        <dbReference type="PROSITE-ProRule" id="PRU00175"/>
    </source>
</evidence>
<evidence type="ECO:0000255" key="3">
    <source>
        <dbReference type="PROSITE-ProRule" id="PRU00541"/>
    </source>
</evidence>
<evidence type="ECO:0000255" key="4">
    <source>
        <dbReference type="PROSITE-ProRule" id="PRU00542"/>
    </source>
</evidence>
<evidence type="ECO:0000256" key="5">
    <source>
        <dbReference type="SAM" id="MobiDB-lite"/>
    </source>
</evidence>
<evidence type="ECO:0000305" key="6"/>